<protein>
    <recommendedName>
        <fullName evidence="1">tRNA (guanine-N(1)-)-methyltransferase</fullName>
        <ecNumber evidence="1">2.1.1.228</ecNumber>
    </recommendedName>
    <alternativeName>
        <fullName evidence="1">M1G-methyltransferase</fullName>
    </alternativeName>
    <alternativeName>
        <fullName evidence="1">tRNA [GM37] methyltransferase</fullName>
    </alternativeName>
</protein>
<name>TRMD_STACT</name>
<reference key="1">
    <citation type="journal article" date="2009" name="Appl. Environ. Microbiol.">
        <title>Genome analysis of the meat starter culture bacterium Staphylococcus carnosus TM300.</title>
        <authorList>
            <person name="Rosenstein R."/>
            <person name="Nerz C."/>
            <person name="Biswas L."/>
            <person name="Resch A."/>
            <person name="Raddatz G."/>
            <person name="Schuster S.C."/>
            <person name="Goetz F."/>
        </authorList>
    </citation>
    <scope>NUCLEOTIDE SEQUENCE [LARGE SCALE GENOMIC DNA]</scope>
    <source>
        <strain>TM300</strain>
    </source>
</reference>
<sequence>MKIDYLTLFPEMFDGVLNHSILKRAQDKEIIQVNTVNFRDYSINKHNQVDDYPFGGGQGMVLKPEPVFNAMKDLETSEATRVILMCPQGKPFSQEIAQDLSSAEHIVFICGHYEGYDERIREHLVTDEISIGDYVLTGGELPAMTMTDAIVRLIPGVLGNEQSHQDDSFSDGLLEFPQYTRPREFEGMNVPDVLLSGNHAKIDAWRHEQKLIRTFVKRPDLLAKYPLTTEDEKILENYKKQLKTK</sequence>
<comment type="function">
    <text evidence="1">Specifically methylates guanosine-37 in various tRNAs.</text>
</comment>
<comment type="catalytic activity">
    <reaction evidence="1">
        <text>guanosine(37) in tRNA + S-adenosyl-L-methionine = N(1)-methylguanosine(37) in tRNA + S-adenosyl-L-homocysteine + H(+)</text>
        <dbReference type="Rhea" id="RHEA:36899"/>
        <dbReference type="Rhea" id="RHEA-COMP:10145"/>
        <dbReference type="Rhea" id="RHEA-COMP:10147"/>
        <dbReference type="ChEBI" id="CHEBI:15378"/>
        <dbReference type="ChEBI" id="CHEBI:57856"/>
        <dbReference type="ChEBI" id="CHEBI:59789"/>
        <dbReference type="ChEBI" id="CHEBI:73542"/>
        <dbReference type="ChEBI" id="CHEBI:74269"/>
        <dbReference type="EC" id="2.1.1.228"/>
    </reaction>
</comment>
<comment type="subunit">
    <text evidence="1">Homodimer.</text>
</comment>
<comment type="subcellular location">
    <subcellularLocation>
        <location evidence="1">Cytoplasm</location>
    </subcellularLocation>
</comment>
<comment type="similarity">
    <text evidence="1">Belongs to the RNA methyltransferase TrmD family.</text>
</comment>
<accession>B9DPK1</accession>
<keyword id="KW-0963">Cytoplasm</keyword>
<keyword id="KW-0489">Methyltransferase</keyword>
<keyword id="KW-1185">Reference proteome</keyword>
<keyword id="KW-0949">S-adenosyl-L-methionine</keyword>
<keyword id="KW-0808">Transferase</keyword>
<keyword id="KW-0819">tRNA processing</keyword>
<proteinExistence type="inferred from homology"/>
<evidence type="ECO:0000255" key="1">
    <source>
        <dbReference type="HAMAP-Rule" id="MF_00605"/>
    </source>
</evidence>
<gene>
    <name evidence="1" type="primary">trmD</name>
    <name type="ordered locus">Sca_0865</name>
</gene>
<feature type="chain" id="PRO_1000198584" description="tRNA (guanine-N(1)-)-methyltransferase">
    <location>
        <begin position="1"/>
        <end position="245"/>
    </location>
</feature>
<feature type="binding site" evidence="1">
    <location>
        <position position="111"/>
    </location>
    <ligand>
        <name>S-adenosyl-L-methionine</name>
        <dbReference type="ChEBI" id="CHEBI:59789"/>
    </ligand>
</feature>
<feature type="binding site" evidence="1">
    <location>
        <begin position="131"/>
        <end position="136"/>
    </location>
    <ligand>
        <name>S-adenosyl-L-methionine</name>
        <dbReference type="ChEBI" id="CHEBI:59789"/>
    </ligand>
</feature>
<organism>
    <name type="scientific">Staphylococcus carnosus (strain TM300)</name>
    <dbReference type="NCBI Taxonomy" id="396513"/>
    <lineage>
        <taxon>Bacteria</taxon>
        <taxon>Bacillati</taxon>
        <taxon>Bacillota</taxon>
        <taxon>Bacilli</taxon>
        <taxon>Bacillales</taxon>
        <taxon>Staphylococcaceae</taxon>
        <taxon>Staphylococcus</taxon>
    </lineage>
</organism>
<dbReference type="EC" id="2.1.1.228" evidence="1"/>
<dbReference type="EMBL" id="AM295250">
    <property type="protein sequence ID" value="CAL27775.1"/>
    <property type="molecule type" value="Genomic_DNA"/>
</dbReference>
<dbReference type="RefSeq" id="WP_015900116.1">
    <property type="nucleotide sequence ID" value="NC_012121.1"/>
</dbReference>
<dbReference type="SMR" id="B9DPK1"/>
<dbReference type="GeneID" id="93793297"/>
<dbReference type="KEGG" id="sca:SCA_0865"/>
<dbReference type="eggNOG" id="COG0336">
    <property type="taxonomic scope" value="Bacteria"/>
</dbReference>
<dbReference type="HOGENOM" id="CLU_047363_0_1_9"/>
<dbReference type="OrthoDB" id="9807416at2"/>
<dbReference type="BioCyc" id="SCAR396513:SCA_RS04370-MONOMER"/>
<dbReference type="Proteomes" id="UP000000444">
    <property type="component" value="Chromosome"/>
</dbReference>
<dbReference type="GO" id="GO:0005829">
    <property type="term" value="C:cytosol"/>
    <property type="evidence" value="ECO:0007669"/>
    <property type="project" value="TreeGrafter"/>
</dbReference>
<dbReference type="GO" id="GO:0052906">
    <property type="term" value="F:tRNA (guanine(37)-N1)-methyltransferase activity"/>
    <property type="evidence" value="ECO:0007669"/>
    <property type="project" value="UniProtKB-UniRule"/>
</dbReference>
<dbReference type="GO" id="GO:0002939">
    <property type="term" value="P:tRNA N1-guanine methylation"/>
    <property type="evidence" value="ECO:0007669"/>
    <property type="project" value="TreeGrafter"/>
</dbReference>
<dbReference type="CDD" id="cd18080">
    <property type="entry name" value="TrmD-like"/>
    <property type="match status" value="1"/>
</dbReference>
<dbReference type="FunFam" id="1.10.1270.20:FF:000001">
    <property type="entry name" value="tRNA (guanine-N(1)-)-methyltransferase"/>
    <property type="match status" value="1"/>
</dbReference>
<dbReference type="FunFam" id="3.40.1280.10:FF:000001">
    <property type="entry name" value="tRNA (guanine-N(1)-)-methyltransferase"/>
    <property type="match status" value="1"/>
</dbReference>
<dbReference type="Gene3D" id="3.40.1280.10">
    <property type="match status" value="1"/>
</dbReference>
<dbReference type="Gene3D" id="1.10.1270.20">
    <property type="entry name" value="tRNA(m1g37)methyltransferase, domain 2"/>
    <property type="match status" value="1"/>
</dbReference>
<dbReference type="HAMAP" id="MF_00605">
    <property type="entry name" value="TrmD"/>
    <property type="match status" value="1"/>
</dbReference>
<dbReference type="InterPro" id="IPR029028">
    <property type="entry name" value="Alpha/beta_knot_MTases"/>
</dbReference>
<dbReference type="InterPro" id="IPR023148">
    <property type="entry name" value="tRNA_m1G_MeTrfase_C_sf"/>
</dbReference>
<dbReference type="InterPro" id="IPR002649">
    <property type="entry name" value="tRNA_m1G_MeTrfase_TrmD"/>
</dbReference>
<dbReference type="InterPro" id="IPR029026">
    <property type="entry name" value="tRNA_m1G_MTases_N"/>
</dbReference>
<dbReference type="InterPro" id="IPR016009">
    <property type="entry name" value="tRNA_MeTrfase_TRMD/TRM10"/>
</dbReference>
<dbReference type="NCBIfam" id="NF000648">
    <property type="entry name" value="PRK00026.1"/>
    <property type="match status" value="1"/>
</dbReference>
<dbReference type="NCBIfam" id="TIGR00088">
    <property type="entry name" value="trmD"/>
    <property type="match status" value="1"/>
</dbReference>
<dbReference type="PANTHER" id="PTHR46417">
    <property type="entry name" value="TRNA (GUANINE-N(1)-)-METHYLTRANSFERASE"/>
    <property type="match status" value="1"/>
</dbReference>
<dbReference type="PANTHER" id="PTHR46417:SF1">
    <property type="entry name" value="TRNA (GUANINE-N(1)-)-METHYLTRANSFERASE"/>
    <property type="match status" value="1"/>
</dbReference>
<dbReference type="Pfam" id="PF01746">
    <property type="entry name" value="tRNA_m1G_MT"/>
    <property type="match status" value="1"/>
</dbReference>
<dbReference type="PIRSF" id="PIRSF000386">
    <property type="entry name" value="tRNA_mtase"/>
    <property type="match status" value="1"/>
</dbReference>
<dbReference type="SUPFAM" id="SSF75217">
    <property type="entry name" value="alpha/beta knot"/>
    <property type="match status" value="1"/>
</dbReference>